<comment type="similarity">
    <text evidence="1">Belongs to the UPF0145 family.</text>
</comment>
<comment type="sequence caution" evidence="2">
    <conflict type="erroneous initiation">
        <sequence resource="EMBL-CDS" id="CAI36209"/>
    </conflict>
</comment>
<organism>
    <name type="scientific">Corynebacterium jeikeium (strain K411)</name>
    <dbReference type="NCBI Taxonomy" id="306537"/>
    <lineage>
        <taxon>Bacteria</taxon>
        <taxon>Bacillati</taxon>
        <taxon>Actinomycetota</taxon>
        <taxon>Actinomycetes</taxon>
        <taxon>Mycobacteriales</taxon>
        <taxon>Corynebacteriaceae</taxon>
        <taxon>Corynebacterium</taxon>
    </lineage>
</organism>
<reference key="1">
    <citation type="journal article" date="2005" name="J. Bacteriol.">
        <title>Complete genome sequence and analysis of the multiresistant nosocomial pathogen Corynebacterium jeikeium K411, a lipid-requiring bacterium of the human skin flora.</title>
        <authorList>
            <person name="Tauch A."/>
            <person name="Kaiser O."/>
            <person name="Hain T."/>
            <person name="Goesmann A."/>
            <person name="Weisshaar B."/>
            <person name="Albersmeier A."/>
            <person name="Bekel T."/>
            <person name="Bischoff N."/>
            <person name="Brune I."/>
            <person name="Chakraborty T."/>
            <person name="Kalinowski J."/>
            <person name="Meyer F."/>
            <person name="Rupp O."/>
            <person name="Schneiker S."/>
            <person name="Viehoever P."/>
            <person name="Puehler A."/>
        </authorList>
    </citation>
    <scope>NUCLEOTIDE SEQUENCE [LARGE SCALE GENOMIC DNA]</scope>
    <source>
        <strain>K411</strain>
    </source>
</reference>
<proteinExistence type="inferred from homology"/>
<protein>
    <recommendedName>
        <fullName evidence="1">UPF0145 protein jk0060</fullName>
    </recommendedName>
</protein>
<name>Y060_CORJK</name>
<gene>
    <name type="ordered locus">jk0060</name>
</gene>
<evidence type="ECO:0000255" key="1">
    <source>
        <dbReference type="HAMAP-Rule" id="MF_00338"/>
    </source>
</evidence>
<evidence type="ECO:0000305" key="2"/>
<dbReference type="EMBL" id="CR931997">
    <property type="protein sequence ID" value="CAI36209.1"/>
    <property type="status" value="ALT_INIT"/>
    <property type="molecule type" value="Genomic_DNA"/>
</dbReference>
<dbReference type="RefSeq" id="WP_005292686.1">
    <property type="nucleotide sequence ID" value="NC_007164.1"/>
</dbReference>
<dbReference type="SMR" id="Q4JY98"/>
<dbReference type="STRING" id="306537.jk0060"/>
<dbReference type="GeneID" id="92737544"/>
<dbReference type="KEGG" id="cjk:jk0060"/>
<dbReference type="eggNOG" id="COG0393">
    <property type="taxonomic scope" value="Bacteria"/>
</dbReference>
<dbReference type="HOGENOM" id="CLU_117144_3_1_11"/>
<dbReference type="OrthoDB" id="9796448at2"/>
<dbReference type="Proteomes" id="UP000000545">
    <property type="component" value="Chromosome"/>
</dbReference>
<dbReference type="Gene3D" id="3.30.110.70">
    <property type="entry name" value="Hypothetical protein apc22750. Chain B"/>
    <property type="match status" value="1"/>
</dbReference>
<dbReference type="HAMAP" id="MF_00338">
    <property type="entry name" value="UPF0145"/>
    <property type="match status" value="1"/>
</dbReference>
<dbReference type="InterPro" id="IPR035439">
    <property type="entry name" value="UPF0145_dom_sf"/>
</dbReference>
<dbReference type="InterPro" id="IPR002765">
    <property type="entry name" value="UPF0145_YbjQ-like"/>
</dbReference>
<dbReference type="PANTHER" id="PTHR34068">
    <property type="entry name" value="UPF0145 PROTEIN YBJQ"/>
    <property type="match status" value="1"/>
</dbReference>
<dbReference type="PANTHER" id="PTHR34068:SF1">
    <property type="entry name" value="UPF0145 PROTEIN YBJQ"/>
    <property type="match status" value="1"/>
</dbReference>
<dbReference type="Pfam" id="PF01906">
    <property type="entry name" value="YbjQ_1"/>
    <property type="match status" value="1"/>
</dbReference>
<dbReference type="SUPFAM" id="SSF117782">
    <property type="entry name" value="YbjQ-like"/>
    <property type="match status" value="1"/>
</dbReference>
<keyword id="KW-1185">Reference proteome</keyword>
<sequence>MIVTTTNNVEGHTIGQYLRIVSGETVAGINMFKDIGAGFRNITGGRSSAYEGEILQARETALKEMVDRALEMGAHGIVGVDVDYESLGQGGMVMVSATGTAVTFQ</sequence>
<feature type="chain" id="PRO_0000225822" description="UPF0145 protein jk0060">
    <location>
        <begin position="1"/>
        <end position="105"/>
    </location>
</feature>
<accession>Q4JY98</accession>